<reference key="1">
    <citation type="submission" date="2003-03" db="EMBL/GenBank/DDBJ databases">
        <title>African swine fever virus genomes.</title>
        <authorList>
            <person name="Kutish G.F."/>
            <person name="Rock D.L."/>
        </authorList>
    </citation>
    <scope>NUCLEOTIDE SEQUENCE [LARGE SCALE GENOMIC DNA]</scope>
</reference>
<protein>
    <recommendedName>
        <fullName>Protein MGF 505-9R</fullName>
    </recommendedName>
</protein>
<feature type="chain" id="PRO_0000373345" description="Protein MGF 505-9R">
    <location>
        <begin position="1"/>
        <end position="508"/>
    </location>
</feature>
<feature type="repeat" description="ANK 1">
    <location>
        <begin position="54"/>
        <end position="83"/>
    </location>
</feature>
<feature type="repeat" description="ANK 2">
    <location>
        <begin position="253"/>
        <end position="282"/>
    </location>
</feature>
<feature type="repeat" description="ANK 3">
    <location>
        <begin position="313"/>
        <end position="343"/>
    </location>
</feature>
<organismHost>
    <name type="scientific">Ornithodoros</name>
    <name type="common">relapsing fever ticks</name>
    <dbReference type="NCBI Taxonomy" id="6937"/>
</organismHost>
<organismHost>
    <name type="scientific">Phacochoerus aethiopicus</name>
    <name type="common">Warthog</name>
    <dbReference type="NCBI Taxonomy" id="85517"/>
</organismHost>
<organismHost>
    <name type="scientific">Phacochoerus africanus</name>
    <name type="common">Warthog</name>
    <dbReference type="NCBI Taxonomy" id="41426"/>
</organismHost>
<organismHost>
    <name type="scientific">Potamochoerus larvatus</name>
    <name type="common">Bushpig</name>
    <dbReference type="NCBI Taxonomy" id="273792"/>
</organismHost>
<organismHost>
    <name type="scientific">Sus scrofa</name>
    <name type="common">Pig</name>
    <dbReference type="NCBI Taxonomy" id="9823"/>
</organismHost>
<dbReference type="EMBL" id="AY261360">
    <property type="status" value="NOT_ANNOTATED_CDS"/>
    <property type="molecule type" value="Genomic_DNA"/>
</dbReference>
<dbReference type="SMR" id="P0C9U6"/>
<dbReference type="Proteomes" id="UP000000861">
    <property type="component" value="Segment"/>
</dbReference>
<dbReference type="Gene3D" id="1.25.40.20">
    <property type="entry name" value="Ankyrin repeat-containing domain"/>
    <property type="match status" value="1"/>
</dbReference>
<dbReference type="InterPro" id="IPR036770">
    <property type="entry name" value="Ankyrin_rpt-contain_sf"/>
</dbReference>
<dbReference type="InterPro" id="IPR004858">
    <property type="entry name" value="MGF_505"/>
</dbReference>
<dbReference type="Pfam" id="PF03158">
    <property type="entry name" value="DUF249"/>
    <property type="match status" value="1"/>
</dbReference>
<evidence type="ECO:0000250" key="1">
    <source>
        <dbReference type="UniProtKB" id="Q89740"/>
    </source>
</evidence>
<evidence type="ECO:0000305" key="2"/>
<keyword id="KW-0040">ANK repeat</keyword>
<keyword id="KW-0244">Early protein</keyword>
<keyword id="KW-0677">Repeat</keyword>
<name>5059R_ASFK5</name>
<organism>
    <name type="scientific">African swine fever virus (isolate Pig/Kenya/KEN-50/1950)</name>
    <name type="common">ASFV</name>
    <dbReference type="NCBI Taxonomy" id="561445"/>
    <lineage>
        <taxon>Viruses</taxon>
        <taxon>Varidnaviria</taxon>
        <taxon>Bamfordvirae</taxon>
        <taxon>Nucleocytoviricota</taxon>
        <taxon>Pokkesviricetes</taxon>
        <taxon>Asfuvirales</taxon>
        <taxon>Asfarviridae</taxon>
        <taxon>Asfivirus</taxon>
        <taxon>African swine fever virus</taxon>
    </lineage>
</organism>
<sequence length="508" mass="59826">MFSLQDLCRKNLFTPLEPLGKHVVQRLGLYWEGHGSLKRMGHCFVCVDQIHILSINLAIKIAAAEGNEEIVKLLLLWGGNLHYAIIGALESRQYELILIYENQIGDWHDILSLIRDPVIYERCHELNVTCTFQCLFQHAIRHNMVSILQKYREDLANNRRMIQLLYEMACRLQNYDIITWIARNWHVFNIEAIFSIAFIRKDLTLYSLGYMFLLDRMSIEDRNFKSIITRHLEYAAKKGLFDFVLESLKYGGQVDTVLFQAVKYNHRKILAYFIHETPRKTVEKLLLHAVESRASKKTMNLLLSSLNYSIHSIIKKLLYAVVKHKYMLVIKLLLERPKKKINLVDAVLYRLVKHSTNAEIVKFMNEFSVSPERVIKVAARLMRVDLIKNISKDVWENKLERIKHLKQIVYTMKHRNGKNLLMYNIYNITGYTYMNIKEAFNLTKFYAVHNATCLFKEMCKNCFVHDLIQLRELLEDCLHIANKHAYIQIAEAANEYIKYIDDIYISLK</sequence>
<proteinExistence type="inferred from homology"/>
<accession>P0C9U6</accession>
<gene>
    <name type="ordered locus">Ken-044</name>
</gene>
<comment type="function">
    <text evidence="1">Plays a role in virus cell tropism, and may be required for efficient virus replication in macrophages.</text>
</comment>
<comment type="induction">
    <text evidence="2">Expressed in the early phase of the viral replicative cycle.</text>
</comment>
<comment type="similarity">
    <text evidence="2">Belongs to the asfivirus MGF 505 family.</text>
</comment>